<reference key="1">
    <citation type="journal article" date="2009" name="Appl. Environ. Microbiol.">
        <title>Three genomes from the phylum Acidobacteria provide insight into the lifestyles of these microorganisms in soils.</title>
        <authorList>
            <person name="Ward N.L."/>
            <person name="Challacombe J.F."/>
            <person name="Janssen P.H."/>
            <person name="Henrissat B."/>
            <person name="Coutinho P.M."/>
            <person name="Wu M."/>
            <person name="Xie G."/>
            <person name="Haft D.H."/>
            <person name="Sait M."/>
            <person name="Badger J."/>
            <person name="Barabote R.D."/>
            <person name="Bradley B."/>
            <person name="Brettin T.S."/>
            <person name="Brinkac L.M."/>
            <person name="Bruce D."/>
            <person name="Creasy T."/>
            <person name="Daugherty S.C."/>
            <person name="Davidsen T.M."/>
            <person name="DeBoy R.T."/>
            <person name="Detter J.C."/>
            <person name="Dodson R.J."/>
            <person name="Durkin A.S."/>
            <person name="Ganapathy A."/>
            <person name="Gwinn-Giglio M."/>
            <person name="Han C.S."/>
            <person name="Khouri H."/>
            <person name="Kiss H."/>
            <person name="Kothari S.P."/>
            <person name="Madupu R."/>
            <person name="Nelson K.E."/>
            <person name="Nelson W.C."/>
            <person name="Paulsen I."/>
            <person name="Penn K."/>
            <person name="Ren Q."/>
            <person name="Rosovitz M.J."/>
            <person name="Selengut J.D."/>
            <person name="Shrivastava S."/>
            <person name="Sullivan S.A."/>
            <person name="Tapia R."/>
            <person name="Thompson L.S."/>
            <person name="Watkins K.L."/>
            <person name="Yang Q."/>
            <person name="Yu C."/>
            <person name="Zafar N."/>
            <person name="Zhou L."/>
            <person name="Kuske C.R."/>
        </authorList>
    </citation>
    <scope>NUCLEOTIDE SEQUENCE [LARGE SCALE GENOMIC DNA]</scope>
    <source>
        <strain>Ellin345</strain>
    </source>
</reference>
<accession>Q1IV51</accession>
<feature type="chain" id="PRO_0000265632" description="Elongation factor 4">
    <location>
        <begin position="1"/>
        <end position="601"/>
    </location>
</feature>
<feature type="domain" description="tr-type G">
    <location>
        <begin position="4"/>
        <end position="186"/>
    </location>
</feature>
<feature type="binding site" evidence="1">
    <location>
        <begin position="16"/>
        <end position="21"/>
    </location>
    <ligand>
        <name>GTP</name>
        <dbReference type="ChEBI" id="CHEBI:37565"/>
    </ligand>
</feature>
<feature type="binding site" evidence="1">
    <location>
        <begin position="133"/>
        <end position="136"/>
    </location>
    <ligand>
        <name>GTP</name>
        <dbReference type="ChEBI" id="CHEBI:37565"/>
    </ligand>
</feature>
<name>LEPA_KORVE</name>
<protein>
    <recommendedName>
        <fullName evidence="1">Elongation factor 4</fullName>
        <shortName evidence="1">EF-4</shortName>
        <ecNumber evidence="1">3.6.5.n1</ecNumber>
    </recommendedName>
    <alternativeName>
        <fullName evidence="1">Ribosomal back-translocase LepA</fullName>
    </alternativeName>
</protein>
<organism>
    <name type="scientific">Koribacter versatilis (strain Ellin345)</name>
    <dbReference type="NCBI Taxonomy" id="204669"/>
    <lineage>
        <taxon>Bacteria</taxon>
        <taxon>Pseudomonadati</taxon>
        <taxon>Acidobacteriota</taxon>
        <taxon>Terriglobia</taxon>
        <taxon>Terriglobales</taxon>
        <taxon>Candidatus Korobacteraceae</taxon>
        <taxon>Candidatus Korobacter</taxon>
    </lineage>
</organism>
<evidence type="ECO:0000255" key="1">
    <source>
        <dbReference type="HAMAP-Rule" id="MF_00071"/>
    </source>
</evidence>
<dbReference type="EC" id="3.6.5.n1" evidence="1"/>
<dbReference type="EMBL" id="CP000360">
    <property type="protein sequence ID" value="ABF39249.1"/>
    <property type="molecule type" value="Genomic_DNA"/>
</dbReference>
<dbReference type="RefSeq" id="WP_011521051.1">
    <property type="nucleotide sequence ID" value="NC_008009.1"/>
</dbReference>
<dbReference type="SMR" id="Q1IV51"/>
<dbReference type="STRING" id="204669.Acid345_0244"/>
<dbReference type="EnsemblBacteria" id="ABF39249">
    <property type="protein sequence ID" value="ABF39249"/>
    <property type="gene ID" value="Acid345_0244"/>
</dbReference>
<dbReference type="KEGG" id="aba:Acid345_0244"/>
<dbReference type="eggNOG" id="COG0481">
    <property type="taxonomic scope" value="Bacteria"/>
</dbReference>
<dbReference type="HOGENOM" id="CLU_009995_3_3_0"/>
<dbReference type="OrthoDB" id="9804431at2"/>
<dbReference type="Proteomes" id="UP000002432">
    <property type="component" value="Chromosome"/>
</dbReference>
<dbReference type="GO" id="GO:0005886">
    <property type="term" value="C:plasma membrane"/>
    <property type="evidence" value="ECO:0007669"/>
    <property type="project" value="UniProtKB-SubCell"/>
</dbReference>
<dbReference type="GO" id="GO:0005525">
    <property type="term" value="F:GTP binding"/>
    <property type="evidence" value="ECO:0007669"/>
    <property type="project" value="UniProtKB-UniRule"/>
</dbReference>
<dbReference type="GO" id="GO:0003924">
    <property type="term" value="F:GTPase activity"/>
    <property type="evidence" value="ECO:0007669"/>
    <property type="project" value="UniProtKB-UniRule"/>
</dbReference>
<dbReference type="GO" id="GO:0043022">
    <property type="term" value="F:ribosome binding"/>
    <property type="evidence" value="ECO:0007669"/>
    <property type="project" value="UniProtKB-UniRule"/>
</dbReference>
<dbReference type="GO" id="GO:0003746">
    <property type="term" value="F:translation elongation factor activity"/>
    <property type="evidence" value="ECO:0007669"/>
    <property type="project" value="UniProtKB-UniRule"/>
</dbReference>
<dbReference type="GO" id="GO:0045727">
    <property type="term" value="P:positive regulation of translation"/>
    <property type="evidence" value="ECO:0007669"/>
    <property type="project" value="UniProtKB-UniRule"/>
</dbReference>
<dbReference type="CDD" id="cd03699">
    <property type="entry name" value="EF4_II"/>
    <property type="match status" value="1"/>
</dbReference>
<dbReference type="CDD" id="cd16260">
    <property type="entry name" value="EF4_III"/>
    <property type="match status" value="1"/>
</dbReference>
<dbReference type="CDD" id="cd01890">
    <property type="entry name" value="LepA"/>
    <property type="match status" value="1"/>
</dbReference>
<dbReference type="CDD" id="cd03709">
    <property type="entry name" value="lepA_C"/>
    <property type="match status" value="1"/>
</dbReference>
<dbReference type="FunFam" id="3.40.50.300:FF:000078">
    <property type="entry name" value="Elongation factor 4"/>
    <property type="match status" value="1"/>
</dbReference>
<dbReference type="FunFam" id="2.40.30.10:FF:000015">
    <property type="entry name" value="Translation factor GUF1, mitochondrial"/>
    <property type="match status" value="1"/>
</dbReference>
<dbReference type="FunFam" id="3.30.70.240:FF:000007">
    <property type="entry name" value="Translation factor GUF1, mitochondrial"/>
    <property type="match status" value="1"/>
</dbReference>
<dbReference type="FunFam" id="3.30.70.2570:FF:000001">
    <property type="entry name" value="Translation factor GUF1, mitochondrial"/>
    <property type="match status" value="1"/>
</dbReference>
<dbReference type="FunFam" id="3.30.70.870:FF:000004">
    <property type="entry name" value="Translation factor GUF1, mitochondrial"/>
    <property type="match status" value="1"/>
</dbReference>
<dbReference type="Gene3D" id="3.30.70.240">
    <property type="match status" value="1"/>
</dbReference>
<dbReference type="Gene3D" id="3.30.70.2570">
    <property type="entry name" value="Elongation factor 4, C-terminal domain"/>
    <property type="match status" value="1"/>
</dbReference>
<dbReference type="Gene3D" id="3.30.70.870">
    <property type="entry name" value="Elongation Factor G (Translational Gtpase), domain 3"/>
    <property type="match status" value="1"/>
</dbReference>
<dbReference type="Gene3D" id="3.40.50.300">
    <property type="entry name" value="P-loop containing nucleotide triphosphate hydrolases"/>
    <property type="match status" value="1"/>
</dbReference>
<dbReference type="Gene3D" id="2.40.30.10">
    <property type="entry name" value="Translation factors"/>
    <property type="match status" value="1"/>
</dbReference>
<dbReference type="HAMAP" id="MF_00071">
    <property type="entry name" value="LepA"/>
    <property type="match status" value="1"/>
</dbReference>
<dbReference type="InterPro" id="IPR006297">
    <property type="entry name" value="EF-4"/>
</dbReference>
<dbReference type="InterPro" id="IPR035647">
    <property type="entry name" value="EFG_III/V"/>
</dbReference>
<dbReference type="InterPro" id="IPR000640">
    <property type="entry name" value="EFG_V-like"/>
</dbReference>
<dbReference type="InterPro" id="IPR004161">
    <property type="entry name" value="EFTu-like_2"/>
</dbReference>
<dbReference type="InterPro" id="IPR038363">
    <property type="entry name" value="LepA_C_sf"/>
</dbReference>
<dbReference type="InterPro" id="IPR013842">
    <property type="entry name" value="LepA_CTD"/>
</dbReference>
<dbReference type="InterPro" id="IPR035654">
    <property type="entry name" value="LepA_IV"/>
</dbReference>
<dbReference type="InterPro" id="IPR027417">
    <property type="entry name" value="P-loop_NTPase"/>
</dbReference>
<dbReference type="InterPro" id="IPR005225">
    <property type="entry name" value="Small_GTP-bd"/>
</dbReference>
<dbReference type="InterPro" id="IPR000795">
    <property type="entry name" value="T_Tr_GTP-bd_dom"/>
</dbReference>
<dbReference type="InterPro" id="IPR009000">
    <property type="entry name" value="Transl_B-barrel_sf"/>
</dbReference>
<dbReference type="NCBIfam" id="TIGR01393">
    <property type="entry name" value="lepA"/>
    <property type="match status" value="1"/>
</dbReference>
<dbReference type="NCBIfam" id="TIGR00231">
    <property type="entry name" value="small_GTP"/>
    <property type="match status" value="1"/>
</dbReference>
<dbReference type="PANTHER" id="PTHR43512:SF4">
    <property type="entry name" value="TRANSLATION FACTOR GUF1 HOMOLOG, CHLOROPLASTIC"/>
    <property type="match status" value="1"/>
</dbReference>
<dbReference type="PANTHER" id="PTHR43512">
    <property type="entry name" value="TRANSLATION FACTOR GUF1-RELATED"/>
    <property type="match status" value="1"/>
</dbReference>
<dbReference type="Pfam" id="PF00679">
    <property type="entry name" value="EFG_C"/>
    <property type="match status" value="1"/>
</dbReference>
<dbReference type="Pfam" id="PF00009">
    <property type="entry name" value="GTP_EFTU"/>
    <property type="match status" value="1"/>
</dbReference>
<dbReference type="Pfam" id="PF03144">
    <property type="entry name" value="GTP_EFTU_D2"/>
    <property type="match status" value="1"/>
</dbReference>
<dbReference type="Pfam" id="PF06421">
    <property type="entry name" value="LepA_C"/>
    <property type="match status" value="1"/>
</dbReference>
<dbReference type="PRINTS" id="PR00315">
    <property type="entry name" value="ELONGATNFCT"/>
</dbReference>
<dbReference type="SUPFAM" id="SSF54980">
    <property type="entry name" value="EF-G C-terminal domain-like"/>
    <property type="match status" value="2"/>
</dbReference>
<dbReference type="SUPFAM" id="SSF52540">
    <property type="entry name" value="P-loop containing nucleoside triphosphate hydrolases"/>
    <property type="match status" value="1"/>
</dbReference>
<dbReference type="SUPFAM" id="SSF50447">
    <property type="entry name" value="Translation proteins"/>
    <property type="match status" value="1"/>
</dbReference>
<dbReference type="PROSITE" id="PS51722">
    <property type="entry name" value="G_TR_2"/>
    <property type="match status" value="1"/>
</dbReference>
<proteinExistence type="inferred from homology"/>
<keyword id="KW-0997">Cell inner membrane</keyword>
<keyword id="KW-1003">Cell membrane</keyword>
<keyword id="KW-0342">GTP-binding</keyword>
<keyword id="KW-0378">Hydrolase</keyword>
<keyword id="KW-0472">Membrane</keyword>
<keyword id="KW-0547">Nucleotide-binding</keyword>
<keyword id="KW-0648">Protein biosynthesis</keyword>
<keyword id="KW-1185">Reference proteome</keyword>
<comment type="function">
    <text evidence="1">Required for accurate and efficient protein synthesis under certain stress conditions. May act as a fidelity factor of the translation reaction, by catalyzing a one-codon backward translocation of tRNAs on improperly translocated ribosomes. Back-translocation proceeds from a post-translocation (POST) complex to a pre-translocation (PRE) complex, thus giving elongation factor G a second chance to translocate the tRNAs correctly. Binds to ribosomes in a GTP-dependent manner.</text>
</comment>
<comment type="catalytic activity">
    <reaction evidence="1">
        <text>GTP + H2O = GDP + phosphate + H(+)</text>
        <dbReference type="Rhea" id="RHEA:19669"/>
        <dbReference type="ChEBI" id="CHEBI:15377"/>
        <dbReference type="ChEBI" id="CHEBI:15378"/>
        <dbReference type="ChEBI" id="CHEBI:37565"/>
        <dbReference type="ChEBI" id="CHEBI:43474"/>
        <dbReference type="ChEBI" id="CHEBI:58189"/>
        <dbReference type="EC" id="3.6.5.n1"/>
    </reaction>
</comment>
<comment type="subcellular location">
    <subcellularLocation>
        <location evidence="1">Cell inner membrane</location>
        <topology evidence="1">Peripheral membrane protein</topology>
        <orientation evidence="1">Cytoplasmic side</orientation>
    </subcellularLocation>
</comment>
<comment type="similarity">
    <text evidence="1">Belongs to the TRAFAC class translation factor GTPase superfamily. Classic translation factor GTPase family. LepA subfamily.</text>
</comment>
<sequence length="601" mass="66982">MDRSFIRNFAIIAHIDHGKSTLSDRLLELTGSLTAREMQAQVLDAMDLERERGITIKAHSVRMMYKAHDDVVYQLNLIDTPGHVDFSYEVSRSLASCEGALLVVDASQGVEAQTLANAYLAINNGLEIIPVINKIDLPSADVERAKEMIEGAVGLDASHALPISAKTGMGVEDILESIVHLVPPPKGNPDHPLQALIFDSWFDSYRGVVILARIKEGTVRKGDKIMLWSNKHQFLVEEMGVLTPKPVAIEQLEAGEVGFIVANIKTVADVGIGDTITHVERPCLEALPGFEELKPMVFAGIYTVDAHEHTLLREALEKLRLNDSSFFFEPESSVALGFGFRCGFLGLLHMEIIQERLEREYDLDLITTAPGVRYKITLTDNSVIEVDNPSKWPDSTLIEKIEEPIITAMILTNEEYVGGILKLVEEKRGRQKNFEYVTGSRVMLTYELPLNEIVLDFYDRLKSVSRGYASLDYHLAGAWESPMVKLDIMVAGESVDALSTIVHKDFAYDRGRALVSKMRELIPRQMFEVPIQAAIGAKIIARETVAAMRKNVLAKCYGGDISRKRKLLEKQKEGKKRMKRIGKVDIPQEAFLAVLKVGENS</sequence>
<gene>
    <name evidence="1" type="primary">lepA</name>
    <name type="ordered locus">Acid345_0244</name>
</gene>